<keyword id="KW-0227">DNA damage</keyword>
<keyword id="KW-0234">DNA repair</keyword>
<keyword id="KW-0255">Endonuclease</keyword>
<keyword id="KW-0378">Hydrolase</keyword>
<keyword id="KW-0479">Metal-binding</keyword>
<keyword id="KW-0540">Nuclease</keyword>
<keyword id="KW-0862">Zinc</keyword>
<feature type="chain" id="PRO_1000096905" description="Probable endonuclease 4">
    <location>
        <begin position="1"/>
        <end position="285"/>
    </location>
</feature>
<feature type="binding site" evidence="1">
    <location>
        <position position="69"/>
    </location>
    <ligand>
        <name>Zn(2+)</name>
        <dbReference type="ChEBI" id="CHEBI:29105"/>
        <label>1</label>
    </ligand>
</feature>
<feature type="binding site" evidence="1">
    <location>
        <position position="109"/>
    </location>
    <ligand>
        <name>Zn(2+)</name>
        <dbReference type="ChEBI" id="CHEBI:29105"/>
        <label>1</label>
    </ligand>
</feature>
<feature type="binding site" evidence="1">
    <location>
        <position position="145"/>
    </location>
    <ligand>
        <name>Zn(2+)</name>
        <dbReference type="ChEBI" id="CHEBI:29105"/>
        <label>1</label>
    </ligand>
</feature>
<feature type="binding site" evidence="1">
    <location>
        <position position="145"/>
    </location>
    <ligand>
        <name>Zn(2+)</name>
        <dbReference type="ChEBI" id="CHEBI:29105"/>
        <label>2</label>
    </ligand>
</feature>
<feature type="binding site" evidence="1">
    <location>
        <position position="179"/>
    </location>
    <ligand>
        <name>Zn(2+)</name>
        <dbReference type="ChEBI" id="CHEBI:29105"/>
        <label>2</label>
    </ligand>
</feature>
<feature type="binding site" evidence="1">
    <location>
        <position position="182"/>
    </location>
    <ligand>
        <name>Zn(2+)</name>
        <dbReference type="ChEBI" id="CHEBI:29105"/>
        <label>3</label>
    </ligand>
</feature>
<feature type="binding site" evidence="1">
    <location>
        <position position="216"/>
    </location>
    <ligand>
        <name>Zn(2+)</name>
        <dbReference type="ChEBI" id="CHEBI:29105"/>
        <label>2</label>
    </ligand>
</feature>
<feature type="binding site" evidence="1">
    <location>
        <position position="229"/>
    </location>
    <ligand>
        <name>Zn(2+)</name>
        <dbReference type="ChEBI" id="CHEBI:29105"/>
        <label>3</label>
    </ligand>
</feature>
<feature type="binding site" evidence="1">
    <location>
        <position position="231"/>
    </location>
    <ligand>
        <name>Zn(2+)</name>
        <dbReference type="ChEBI" id="CHEBI:29105"/>
        <label>3</label>
    </ligand>
</feature>
<feature type="binding site" evidence="1">
    <location>
        <position position="261"/>
    </location>
    <ligand>
        <name>Zn(2+)</name>
        <dbReference type="ChEBI" id="CHEBI:29105"/>
        <label>2</label>
    </ligand>
</feature>
<proteinExistence type="inferred from homology"/>
<evidence type="ECO:0000255" key="1">
    <source>
        <dbReference type="HAMAP-Rule" id="MF_00152"/>
    </source>
</evidence>
<accession>B4TNR0</accession>
<comment type="function">
    <text evidence="1">Endonuclease IV plays a role in DNA repair. It cleaves phosphodiester bonds at apurinic or apyrimidinic (AP) sites, generating a 3'-hydroxyl group and a 5'-terminal sugar phosphate.</text>
</comment>
<comment type="catalytic activity">
    <reaction evidence="1">
        <text>Endonucleolytic cleavage to 5'-phosphooligonucleotide end-products.</text>
        <dbReference type="EC" id="3.1.21.2"/>
    </reaction>
</comment>
<comment type="cofactor">
    <cofactor evidence="1">
        <name>Zn(2+)</name>
        <dbReference type="ChEBI" id="CHEBI:29105"/>
    </cofactor>
    <text evidence="1">Binds 3 Zn(2+) ions.</text>
</comment>
<comment type="similarity">
    <text evidence="1">Belongs to the AP endonuclease 2 family.</text>
</comment>
<organism>
    <name type="scientific">Salmonella schwarzengrund (strain CVM19633)</name>
    <dbReference type="NCBI Taxonomy" id="439843"/>
    <lineage>
        <taxon>Bacteria</taxon>
        <taxon>Pseudomonadati</taxon>
        <taxon>Pseudomonadota</taxon>
        <taxon>Gammaproteobacteria</taxon>
        <taxon>Enterobacterales</taxon>
        <taxon>Enterobacteriaceae</taxon>
        <taxon>Salmonella</taxon>
    </lineage>
</organism>
<name>END4_SALSV</name>
<sequence>MKYIGAHVSAAGGLANAPARAAEIGATAFALFTKNQRQWRAAPLTPQVIDDFKIACEKYHFSAAQILPHDSYLINLGHPVSEALEKSRVAFLDEMQRCEQLGLTLLNFHPGSHLMQIAQEDCLARIAESINIALAQTEGVTAVIENTAGQGSNLGFEFEQLAAIIDGVEDKSRVGVCIDTCHAFAAGYDLRTPEACEKTFAGFGKIVGFQYLRGMHLNDAKSAFGSRVDRHHSLGEGNIGHDAFRWIMQDARFDGIPLILETINPDIWAEEIAWLKAQQIAEAVA</sequence>
<reference key="1">
    <citation type="journal article" date="2011" name="J. Bacteriol.">
        <title>Comparative genomics of 28 Salmonella enterica isolates: evidence for CRISPR-mediated adaptive sublineage evolution.</title>
        <authorList>
            <person name="Fricke W.F."/>
            <person name="Mammel M.K."/>
            <person name="McDermott P.F."/>
            <person name="Tartera C."/>
            <person name="White D.G."/>
            <person name="Leclerc J.E."/>
            <person name="Ravel J."/>
            <person name="Cebula T.A."/>
        </authorList>
    </citation>
    <scope>NUCLEOTIDE SEQUENCE [LARGE SCALE GENOMIC DNA]</scope>
    <source>
        <strain>CVM19633</strain>
    </source>
</reference>
<protein>
    <recommendedName>
        <fullName evidence="1">Probable endonuclease 4</fullName>
        <ecNumber evidence="1">3.1.21.2</ecNumber>
    </recommendedName>
    <alternativeName>
        <fullName evidence="1">Endodeoxyribonuclease IV</fullName>
    </alternativeName>
    <alternativeName>
        <fullName evidence="1">Endonuclease IV</fullName>
    </alternativeName>
</protein>
<dbReference type="EC" id="3.1.21.2" evidence="1"/>
<dbReference type="EMBL" id="CP001127">
    <property type="protein sequence ID" value="ACF91282.1"/>
    <property type="molecule type" value="Genomic_DNA"/>
</dbReference>
<dbReference type="RefSeq" id="WP_000873918.1">
    <property type="nucleotide sequence ID" value="NC_011094.1"/>
</dbReference>
<dbReference type="SMR" id="B4TNR0"/>
<dbReference type="KEGG" id="sew:SeSA_A2442"/>
<dbReference type="HOGENOM" id="CLU_025885_0_4_6"/>
<dbReference type="Proteomes" id="UP000001865">
    <property type="component" value="Chromosome"/>
</dbReference>
<dbReference type="GO" id="GO:0008833">
    <property type="term" value="F:deoxyribonuclease IV (phage-T4-induced) activity"/>
    <property type="evidence" value="ECO:0007669"/>
    <property type="project" value="UniProtKB-UniRule"/>
</dbReference>
<dbReference type="GO" id="GO:0003677">
    <property type="term" value="F:DNA binding"/>
    <property type="evidence" value="ECO:0007669"/>
    <property type="project" value="InterPro"/>
</dbReference>
<dbReference type="GO" id="GO:0003906">
    <property type="term" value="F:DNA-(apurinic or apyrimidinic site) endonuclease activity"/>
    <property type="evidence" value="ECO:0007669"/>
    <property type="project" value="TreeGrafter"/>
</dbReference>
<dbReference type="GO" id="GO:0008081">
    <property type="term" value="F:phosphoric diester hydrolase activity"/>
    <property type="evidence" value="ECO:0007669"/>
    <property type="project" value="TreeGrafter"/>
</dbReference>
<dbReference type="GO" id="GO:0008270">
    <property type="term" value="F:zinc ion binding"/>
    <property type="evidence" value="ECO:0007669"/>
    <property type="project" value="UniProtKB-UniRule"/>
</dbReference>
<dbReference type="GO" id="GO:0006284">
    <property type="term" value="P:base-excision repair"/>
    <property type="evidence" value="ECO:0007669"/>
    <property type="project" value="TreeGrafter"/>
</dbReference>
<dbReference type="CDD" id="cd00019">
    <property type="entry name" value="AP2Ec"/>
    <property type="match status" value="1"/>
</dbReference>
<dbReference type="FunFam" id="3.20.20.150:FF:000001">
    <property type="entry name" value="Probable endonuclease 4"/>
    <property type="match status" value="1"/>
</dbReference>
<dbReference type="Gene3D" id="3.20.20.150">
    <property type="entry name" value="Divalent-metal-dependent TIM barrel enzymes"/>
    <property type="match status" value="1"/>
</dbReference>
<dbReference type="HAMAP" id="MF_00152">
    <property type="entry name" value="Nfo"/>
    <property type="match status" value="1"/>
</dbReference>
<dbReference type="InterPro" id="IPR001719">
    <property type="entry name" value="AP_endonuc_2"/>
</dbReference>
<dbReference type="InterPro" id="IPR018246">
    <property type="entry name" value="AP_endonuc_F2_Zn_BS"/>
</dbReference>
<dbReference type="InterPro" id="IPR036237">
    <property type="entry name" value="Xyl_isomerase-like_sf"/>
</dbReference>
<dbReference type="InterPro" id="IPR013022">
    <property type="entry name" value="Xyl_isomerase-like_TIM-brl"/>
</dbReference>
<dbReference type="NCBIfam" id="TIGR00587">
    <property type="entry name" value="nfo"/>
    <property type="match status" value="1"/>
</dbReference>
<dbReference type="NCBIfam" id="NF002199">
    <property type="entry name" value="PRK01060.1-4"/>
    <property type="match status" value="1"/>
</dbReference>
<dbReference type="PANTHER" id="PTHR21445:SF0">
    <property type="entry name" value="APURINIC-APYRIMIDINIC ENDONUCLEASE"/>
    <property type="match status" value="1"/>
</dbReference>
<dbReference type="PANTHER" id="PTHR21445">
    <property type="entry name" value="ENDONUCLEASE IV ENDODEOXYRIBONUCLEASE IV"/>
    <property type="match status" value="1"/>
</dbReference>
<dbReference type="Pfam" id="PF01261">
    <property type="entry name" value="AP_endonuc_2"/>
    <property type="match status" value="1"/>
</dbReference>
<dbReference type="SMART" id="SM00518">
    <property type="entry name" value="AP2Ec"/>
    <property type="match status" value="1"/>
</dbReference>
<dbReference type="SUPFAM" id="SSF51658">
    <property type="entry name" value="Xylose isomerase-like"/>
    <property type="match status" value="1"/>
</dbReference>
<dbReference type="PROSITE" id="PS00729">
    <property type="entry name" value="AP_NUCLEASE_F2_1"/>
    <property type="match status" value="1"/>
</dbReference>
<dbReference type="PROSITE" id="PS00730">
    <property type="entry name" value="AP_NUCLEASE_F2_2"/>
    <property type="match status" value="1"/>
</dbReference>
<dbReference type="PROSITE" id="PS00731">
    <property type="entry name" value="AP_NUCLEASE_F2_3"/>
    <property type="match status" value="1"/>
</dbReference>
<dbReference type="PROSITE" id="PS51432">
    <property type="entry name" value="AP_NUCLEASE_F2_4"/>
    <property type="match status" value="1"/>
</dbReference>
<gene>
    <name evidence="1" type="primary">nfo</name>
    <name type="ordered locus">SeSA_A2442</name>
</gene>